<reference key="1">
    <citation type="journal article" date="2003" name="Nat. Genet.">
        <title>Comparative analysis of the genome sequences of Bordetella pertussis, Bordetella parapertussis and Bordetella bronchiseptica.</title>
        <authorList>
            <person name="Parkhill J."/>
            <person name="Sebaihia M."/>
            <person name="Preston A."/>
            <person name="Murphy L.D."/>
            <person name="Thomson N.R."/>
            <person name="Harris D.E."/>
            <person name="Holden M.T.G."/>
            <person name="Churcher C.M."/>
            <person name="Bentley S.D."/>
            <person name="Mungall K.L."/>
            <person name="Cerdeno-Tarraga A.-M."/>
            <person name="Temple L."/>
            <person name="James K.D."/>
            <person name="Harris B."/>
            <person name="Quail M.A."/>
            <person name="Achtman M."/>
            <person name="Atkin R."/>
            <person name="Baker S."/>
            <person name="Basham D."/>
            <person name="Bason N."/>
            <person name="Cherevach I."/>
            <person name="Chillingworth T."/>
            <person name="Collins M."/>
            <person name="Cronin A."/>
            <person name="Davis P."/>
            <person name="Doggett J."/>
            <person name="Feltwell T."/>
            <person name="Goble A."/>
            <person name="Hamlin N."/>
            <person name="Hauser H."/>
            <person name="Holroyd S."/>
            <person name="Jagels K."/>
            <person name="Leather S."/>
            <person name="Moule S."/>
            <person name="Norberczak H."/>
            <person name="O'Neil S."/>
            <person name="Ormond D."/>
            <person name="Price C."/>
            <person name="Rabbinowitsch E."/>
            <person name="Rutter S."/>
            <person name="Sanders M."/>
            <person name="Saunders D."/>
            <person name="Seeger K."/>
            <person name="Sharp S."/>
            <person name="Simmonds M."/>
            <person name="Skelton J."/>
            <person name="Squares R."/>
            <person name="Squares S."/>
            <person name="Stevens K."/>
            <person name="Unwin L."/>
            <person name="Whitehead S."/>
            <person name="Barrell B.G."/>
            <person name="Maskell D.J."/>
        </authorList>
    </citation>
    <scope>NUCLEOTIDE SEQUENCE [LARGE SCALE GENOMIC DNA]</scope>
    <source>
        <strain>12822 / ATCC BAA-587 / NCTC 13253</strain>
    </source>
</reference>
<proteinExistence type="inferred from homology"/>
<sequence length="623" mass="67415">MLAWRPGRPDGCRAAGGRRYNPGHDCIKASVSLNSAARNAPAGSQPVKAELWKRVYSRVGSYWKGLVLAVLLMAGAAATQPTLAVIMKPLLDDGFSGAKPHYVWFLPLAVVGLILLRGICNFFSDYLLAWVANNVLRGIRGEMFERLLGLPDADFKRGDTGRLLNRFTIDAGNVTGYATDVITVLVRETLVVIALIGVLLYMSWALTLIILVMLPVSVGIARAFTRRLRRINRETVNMNAELTRVVSEGIDGQRVIKLFDGYDAERRRFDFVNSRLRRFAMRSATADAALTPLTQVCISVAVGAVIAVALSQANSGALTVGSFASFMAALAQIFDPIKRLTNLAGKMQKMLVAAESVFTLVDQTPEADAGTRALPEPVRGKVEFRAVSHRFPDADRDTVSAVSFLVEPGQTVALVGRSGSGKTTLVNMLPRFVLPDGGDILFDDVPIQDLTLRSLRSHLSLVSQDVVLFDDTIAANVGYGAGGTVDDARVRDALAAANLLEFVDGLPLGIHTPVGQNAARLSGGQRQRLAIARALIKNAPVLILDEATSALDNESERQVQASLERLMRGRTTLVIAHRLSTVQNADRIIVLDAGKIVEHGPHSELLAANGLYASLYNMQFRED</sequence>
<feature type="chain" id="PRO_0000092569" description="ATP-dependent lipid A-core flippase">
    <location>
        <begin position="1"/>
        <end position="623"/>
    </location>
</feature>
<feature type="transmembrane region" description="Helical" evidence="1">
    <location>
        <begin position="66"/>
        <end position="86"/>
    </location>
</feature>
<feature type="transmembrane region" description="Helical" evidence="1">
    <location>
        <begin position="103"/>
        <end position="123"/>
    </location>
</feature>
<feature type="transmembrane region" description="Helical" evidence="1">
    <location>
        <begin position="190"/>
        <end position="210"/>
    </location>
</feature>
<feature type="transmembrane region" description="Helical" evidence="1">
    <location>
        <begin position="290"/>
        <end position="310"/>
    </location>
</feature>
<feature type="transmembrane region" description="Helical" evidence="1">
    <location>
        <begin position="317"/>
        <end position="337"/>
    </location>
</feature>
<feature type="domain" description="ABC transmembrane type-1" evidence="1">
    <location>
        <begin position="67"/>
        <end position="349"/>
    </location>
</feature>
<feature type="domain" description="ABC transporter" evidence="1">
    <location>
        <begin position="382"/>
        <end position="618"/>
    </location>
</feature>
<feature type="binding site" evidence="1">
    <location>
        <begin position="416"/>
        <end position="423"/>
    </location>
    <ligand>
        <name>ATP</name>
        <dbReference type="ChEBI" id="CHEBI:30616"/>
    </ligand>
</feature>
<keyword id="KW-0067">ATP-binding</keyword>
<keyword id="KW-0997">Cell inner membrane</keyword>
<keyword id="KW-1003">Cell membrane</keyword>
<keyword id="KW-0445">Lipid transport</keyword>
<keyword id="KW-0472">Membrane</keyword>
<keyword id="KW-0547">Nucleotide-binding</keyword>
<keyword id="KW-1278">Translocase</keyword>
<keyword id="KW-0812">Transmembrane</keyword>
<keyword id="KW-1133">Transmembrane helix</keyword>
<keyword id="KW-0813">Transport</keyword>
<comment type="function">
    <text evidence="1">Involved in lipopolysaccharide (LPS) biosynthesis. Translocates lipid A-core from the inner to the outer leaflet of the inner membrane. Transmembrane domains (TMD) form a pore in the inner membrane and the ATP-binding domain (NBD) is responsible for energy generation.</text>
</comment>
<comment type="catalytic activity">
    <reaction evidence="1">
        <text>ATP + H2O + lipid A-core oligosaccharideSide 1 = ADP + phosphate + lipid A-core oligosaccharideSide 2.</text>
        <dbReference type="EC" id="7.5.2.6"/>
    </reaction>
</comment>
<comment type="subunit">
    <text evidence="1">Homodimer.</text>
</comment>
<comment type="subcellular location">
    <subcellularLocation>
        <location evidence="1">Cell inner membrane</location>
        <topology evidence="1">Multi-pass membrane protein</topology>
    </subcellularLocation>
</comment>
<comment type="domain">
    <text evidence="1">In MsbA the ATP-binding domain (NBD) and the transmembrane domain (TMD) are fused.</text>
</comment>
<comment type="similarity">
    <text evidence="1">Belongs to the ABC transporter superfamily. Lipid exporter (TC 3.A.1.106) family.</text>
</comment>
<accession>Q7W9N7</accession>
<gene>
    <name evidence="1" type="primary">msbA</name>
    <name type="ordered locus">BPP1718</name>
</gene>
<evidence type="ECO:0000255" key="1">
    <source>
        <dbReference type="HAMAP-Rule" id="MF_01703"/>
    </source>
</evidence>
<organism>
    <name type="scientific">Bordetella parapertussis (strain 12822 / ATCC BAA-587 / NCTC 13253)</name>
    <dbReference type="NCBI Taxonomy" id="257311"/>
    <lineage>
        <taxon>Bacteria</taxon>
        <taxon>Pseudomonadati</taxon>
        <taxon>Pseudomonadota</taxon>
        <taxon>Betaproteobacteria</taxon>
        <taxon>Burkholderiales</taxon>
        <taxon>Alcaligenaceae</taxon>
        <taxon>Bordetella</taxon>
    </lineage>
</organism>
<name>MSBA_BORPA</name>
<dbReference type="EC" id="7.5.2.6" evidence="1"/>
<dbReference type="EMBL" id="BX640428">
    <property type="protein sequence ID" value="CAE37019.1"/>
    <property type="molecule type" value="Genomic_DNA"/>
</dbReference>
<dbReference type="SMR" id="Q7W9N7"/>
<dbReference type="KEGG" id="bpa:BPP1718"/>
<dbReference type="HOGENOM" id="CLU_000604_84_3_4"/>
<dbReference type="Proteomes" id="UP000001421">
    <property type="component" value="Chromosome"/>
</dbReference>
<dbReference type="GO" id="GO:0005886">
    <property type="term" value="C:plasma membrane"/>
    <property type="evidence" value="ECO:0007669"/>
    <property type="project" value="UniProtKB-SubCell"/>
</dbReference>
<dbReference type="GO" id="GO:0015421">
    <property type="term" value="F:ABC-type oligopeptide transporter activity"/>
    <property type="evidence" value="ECO:0007669"/>
    <property type="project" value="TreeGrafter"/>
</dbReference>
<dbReference type="GO" id="GO:0005524">
    <property type="term" value="F:ATP binding"/>
    <property type="evidence" value="ECO:0007669"/>
    <property type="project" value="UniProtKB-KW"/>
</dbReference>
<dbReference type="GO" id="GO:0016887">
    <property type="term" value="F:ATP hydrolysis activity"/>
    <property type="evidence" value="ECO:0007669"/>
    <property type="project" value="InterPro"/>
</dbReference>
<dbReference type="GO" id="GO:0034040">
    <property type="term" value="F:ATPase-coupled lipid transmembrane transporter activity"/>
    <property type="evidence" value="ECO:0007669"/>
    <property type="project" value="InterPro"/>
</dbReference>
<dbReference type="CDD" id="cd18552">
    <property type="entry name" value="ABC_6TM_MsbA_like"/>
    <property type="match status" value="1"/>
</dbReference>
<dbReference type="FunFam" id="3.40.50.300:FF:000221">
    <property type="entry name" value="Multidrug ABC transporter ATP-binding protein"/>
    <property type="match status" value="1"/>
</dbReference>
<dbReference type="Gene3D" id="1.20.1560.10">
    <property type="entry name" value="ABC transporter type 1, transmembrane domain"/>
    <property type="match status" value="1"/>
</dbReference>
<dbReference type="Gene3D" id="3.40.50.300">
    <property type="entry name" value="P-loop containing nucleotide triphosphate hydrolases"/>
    <property type="match status" value="1"/>
</dbReference>
<dbReference type="InterPro" id="IPR003593">
    <property type="entry name" value="AAA+_ATPase"/>
</dbReference>
<dbReference type="InterPro" id="IPR011527">
    <property type="entry name" value="ABC1_TM_dom"/>
</dbReference>
<dbReference type="InterPro" id="IPR036640">
    <property type="entry name" value="ABC1_TM_sf"/>
</dbReference>
<dbReference type="InterPro" id="IPR003439">
    <property type="entry name" value="ABC_transporter-like_ATP-bd"/>
</dbReference>
<dbReference type="InterPro" id="IPR017871">
    <property type="entry name" value="ABC_transporter-like_CS"/>
</dbReference>
<dbReference type="InterPro" id="IPR011917">
    <property type="entry name" value="ABC_transpr_lipidA"/>
</dbReference>
<dbReference type="InterPro" id="IPR027417">
    <property type="entry name" value="P-loop_NTPase"/>
</dbReference>
<dbReference type="InterPro" id="IPR039421">
    <property type="entry name" value="Type_1_exporter"/>
</dbReference>
<dbReference type="NCBIfam" id="TIGR02203">
    <property type="entry name" value="MsbA_lipidA"/>
    <property type="match status" value="1"/>
</dbReference>
<dbReference type="PANTHER" id="PTHR43394:SF1">
    <property type="entry name" value="ATP-BINDING CASSETTE SUB-FAMILY B MEMBER 10, MITOCHONDRIAL"/>
    <property type="match status" value="1"/>
</dbReference>
<dbReference type="PANTHER" id="PTHR43394">
    <property type="entry name" value="ATP-DEPENDENT PERMEASE MDL1, MITOCHONDRIAL"/>
    <property type="match status" value="1"/>
</dbReference>
<dbReference type="Pfam" id="PF00664">
    <property type="entry name" value="ABC_membrane"/>
    <property type="match status" value="1"/>
</dbReference>
<dbReference type="Pfam" id="PF00005">
    <property type="entry name" value="ABC_tran"/>
    <property type="match status" value="1"/>
</dbReference>
<dbReference type="SMART" id="SM00382">
    <property type="entry name" value="AAA"/>
    <property type="match status" value="1"/>
</dbReference>
<dbReference type="SUPFAM" id="SSF90123">
    <property type="entry name" value="ABC transporter transmembrane region"/>
    <property type="match status" value="1"/>
</dbReference>
<dbReference type="SUPFAM" id="SSF52540">
    <property type="entry name" value="P-loop containing nucleoside triphosphate hydrolases"/>
    <property type="match status" value="1"/>
</dbReference>
<dbReference type="PROSITE" id="PS50929">
    <property type="entry name" value="ABC_TM1F"/>
    <property type="match status" value="1"/>
</dbReference>
<dbReference type="PROSITE" id="PS00211">
    <property type="entry name" value="ABC_TRANSPORTER_1"/>
    <property type="match status" value="1"/>
</dbReference>
<dbReference type="PROSITE" id="PS50893">
    <property type="entry name" value="ABC_TRANSPORTER_2"/>
    <property type="match status" value="1"/>
</dbReference>
<dbReference type="PROSITE" id="PS51239">
    <property type="entry name" value="MSBA"/>
    <property type="match status" value="1"/>
</dbReference>
<protein>
    <recommendedName>
        <fullName evidence="1">ATP-dependent lipid A-core flippase</fullName>
        <ecNumber evidence="1">7.5.2.6</ecNumber>
    </recommendedName>
    <alternativeName>
        <fullName evidence="1">Lipid A export ATP-binding/permease protein MsbA</fullName>
    </alternativeName>
</protein>